<reference key="1">
    <citation type="journal article" date="1998" name="Brain Res. Mol. Brain Res.">
        <title>Molecular cloning and pharmacological characterization of an atypical gerbil angiotensin II type-1 receptor and its mRNA expression in brain and peripheral tissues.</title>
        <authorList>
            <person name="Moriuchi R."/>
            <person name="Shibata S."/>
            <person name="Himeno A."/>
            <person name="Johren O."/>
            <person name="Hoe K.L."/>
            <person name="Saavedra J.M."/>
        </authorList>
    </citation>
    <scope>NUCLEOTIDE SEQUENCE [MRNA]</scope>
    <scope>FUNCTION</scope>
</reference>
<accession>O35210</accession>
<sequence length="359" mass="40780">MALNSSADDGIKRIQDDCPKAGRHSYIFVMIPTLYSIIFVVGIFGNSLVVIVIYFYMKLKTVASVFLLNLALADLCFLLTLPVWAVYTAMEYRWPFGNHLCKIASAGISFNLYASVFLLTCLSIDRYLAIVHPMKSRLRRTMLVAKVTCVVIWLLAGLASLPAVIHRNVYFIENTNSTVCAFHYESQNSTLPVGLGLTKNILGFMFPFLIILTSYTLIWKALKKAYEIQKNKPRNDDIFRIIMAIVLFFFFSWIPHQIFTFLDVLIQLGVIRDCKIADVVDTAMPITICIAYFNNCLNPLFYGFLGKKFKKYFLQLLKYIPPKAKSHSSLSTKMSTLSYRPSDNMNSSAKKPASCFEVE</sequence>
<gene>
    <name type="primary">AGTR1</name>
</gene>
<evidence type="ECO:0000250" key="1">
    <source>
        <dbReference type="UniProtKB" id="P25095"/>
    </source>
</evidence>
<evidence type="ECO:0000250" key="2">
    <source>
        <dbReference type="UniProtKB" id="P30556"/>
    </source>
</evidence>
<evidence type="ECO:0000255" key="3"/>
<evidence type="ECO:0000255" key="4">
    <source>
        <dbReference type="PROSITE-ProRule" id="PRU00521"/>
    </source>
</evidence>
<evidence type="ECO:0000269" key="5">
    <source>
    </source>
</evidence>
<evidence type="ECO:0000303" key="6">
    <source>
    </source>
</evidence>
<evidence type="ECO:0000305" key="7"/>
<proteinExistence type="evidence at transcript level"/>
<comment type="function">
    <text evidence="2 5">Receptor for angiotensin II, a vasoconstricting peptide, which acts as a key regulator of blood pressure and sodium retention by the kidney (PubMed:9757050). The activated receptor in turn couples to G-alpha proteins G(q) (GNAQ, GNA11, GNA14 or GNA15) and thus activates phospholipase C and increases the cytosolic Ca(2+) concentrations, which in turn triggers cellular responses such as stimulation of protein kinase C (By similarity).</text>
</comment>
<comment type="subunit">
    <text evidence="1 2">Interacts with MAS1 (By similarity). Interacts with ARRB1 (By similarity). Interacts with FLNA (via filamin repeat 21); increases PKA-mediated phosphorylation of FLNA (By similarity).</text>
</comment>
<comment type="subcellular location">
    <subcellularLocation>
        <location evidence="2">Cell membrane</location>
        <topology evidence="2">Multi-pass membrane protein</topology>
    </subcellularLocation>
</comment>
<comment type="PTM">
    <text evidence="2">C-terminal Ser or Thr residues may be phosphorylated.</text>
</comment>
<comment type="similarity">
    <text evidence="4">Belongs to the G-protein coupled receptor 1 family.</text>
</comment>
<feature type="chain" id="PRO_0000069154" description="Type-1 angiotensin II receptor">
    <location>
        <begin position="1"/>
        <end position="359"/>
    </location>
</feature>
<feature type="topological domain" description="Extracellular" evidence="2">
    <location>
        <begin position="1"/>
        <end position="25"/>
    </location>
</feature>
<feature type="transmembrane region" description="Helical; Name=1" evidence="2">
    <location>
        <begin position="26"/>
        <end position="55"/>
    </location>
</feature>
<feature type="topological domain" description="Cytoplasmic" evidence="2 7">
    <location>
        <begin position="56"/>
        <end position="61"/>
    </location>
</feature>
<feature type="transmembrane region" description="Helical; Name=2" evidence="2">
    <location>
        <begin position="62"/>
        <end position="89"/>
    </location>
</feature>
<feature type="topological domain" description="Extracellular" evidence="2 7">
    <location>
        <begin position="90"/>
        <end position="98"/>
    </location>
</feature>
<feature type="transmembrane region" description="Helical; Name=3" evidence="2">
    <location>
        <begin position="99"/>
        <end position="125"/>
    </location>
</feature>
<feature type="topological domain" description="Cytoplasmic" evidence="2">
    <location>
        <begin position="126"/>
        <end position="141"/>
    </location>
</feature>
<feature type="transmembrane region" description="Helical; Name=4" evidence="2">
    <location>
        <begin position="142"/>
        <end position="165"/>
    </location>
</feature>
<feature type="topological domain" description="Extracellular" evidence="2">
    <location>
        <begin position="166"/>
        <end position="190"/>
    </location>
</feature>
<feature type="transmembrane region" description="Helical; Name=5" evidence="2">
    <location>
        <begin position="191"/>
        <end position="216"/>
    </location>
</feature>
<feature type="topological domain" description="Cytoplasmic" evidence="2">
    <location>
        <begin position="217"/>
        <end position="239"/>
    </location>
</feature>
<feature type="transmembrane region" description="Helical; Name=6" evidence="2">
    <location>
        <begin position="240"/>
        <end position="268"/>
    </location>
</feature>
<feature type="topological domain" description="Extracellular" evidence="2 7">
    <location>
        <begin position="269"/>
        <end position="278"/>
    </location>
</feature>
<feature type="transmembrane region" description="Helical; Name=7" evidence="2">
    <location>
        <begin position="279"/>
        <end position="304"/>
    </location>
</feature>
<feature type="topological domain" description="Cytoplasmic" evidence="2">
    <location>
        <begin position="305"/>
        <end position="359"/>
    </location>
</feature>
<feature type="binding site" evidence="2">
    <location>
        <position position="15"/>
    </location>
    <ligand>
        <name>angiotensin II</name>
        <dbReference type="ChEBI" id="CHEBI:58506"/>
    </ligand>
</feature>
<feature type="binding site" evidence="2">
    <location>
        <position position="17"/>
    </location>
    <ligand>
        <name>angiotensin II</name>
        <dbReference type="ChEBI" id="CHEBI:58506"/>
    </ligand>
</feature>
<feature type="binding site" evidence="2">
    <location>
        <position position="167"/>
    </location>
    <ligand>
        <name>angiotensin II</name>
        <dbReference type="ChEBI" id="CHEBI:58506"/>
    </ligand>
</feature>
<feature type="binding site" evidence="2">
    <location>
        <position position="182"/>
    </location>
    <ligand>
        <name>angiotensin II</name>
        <dbReference type="ChEBI" id="CHEBI:58506"/>
    </ligand>
</feature>
<feature type="binding site" evidence="2">
    <location>
        <position position="183"/>
    </location>
    <ligand>
        <name>angiotensin II</name>
        <dbReference type="ChEBI" id="CHEBI:58506"/>
    </ligand>
</feature>
<feature type="binding site" evidence="2">
    <location>
        <position position="184"/>
    </location>
    <ligand>
        <name>angiotensin II</name>
        <dbReference type="ChEBI" id="CHEBI:58506"/>
    </ligand>
</feature>
<feature type="binding site" evidence="2">
    <location>
        <position position="199"/>
    </location>
    <ligand>
        <name>angiotensin II</name>
        <dbReference type="ChEBI" id="CHEBI:58506"/>
    </ligand>
</feature>
<feature type="lipid moiety-binding region" description="S-palmitoyl cysteine" evidence="3">
    <location>
        <position position="355"/>
    </location>
</feature>
<feature type="glycosylation site" description="N-linked (GlcNAc...) asparagine" evidence="3">
    <location>
        <position position="4"/>
    </location>
</feature>
<feature type="glycosylation site" description="N-linked (GlcNAc...) asparagine" evidence="3">
    <location>
        <position position="176"/>
    </location>
</feature>
<feature type="glycosylation site" description="N-linked (GlcNAc...) asparagine" evidence="3">
    <location>
        <position position="188"/>
    </location>
</feature>
<feature type="disulfide bond" evidence="2">
    <location>
        <begin position="18"/>
        <end position="274"/>
    </location>
</feature>
<feature type="disulfide bond" evidence="4">
    <location>
        <begin position="101"/>
        <end position="180"/>
    </location>
</feature>
<name>AGTR1_MERUN</name>
<keyword id="KW-1003">Cell membrane</keyword>
<keyword id="KW-1015">Disulfide bond</keyword>
<keyword id="KW-0297">G-protein coupled receptor</keyword>
<keyword id="KW-0325">Glycoprotein</keyword>
<keyword id="KW-0449">Lipoprotein</keyword>
<keyword id="KW-0472">Membrane</keyword>
<keyword id="KW-0564">Palmitate</keyword>
<keyword id="KW-0597">Phosphoprotein</keyword>
<keyword id="KW-0675">Receptor</keyword>
<keyword id="KW-0807">Transducer</keyword>
<keyword id="KW-0812">Transmembrane</keyword>
<keyword id="KW-1133">Transmembrane helix</keyword>
<organism>
    <name type="scientific">Meriones unguiculatus</name>
    <name type="common">Mongolian jird</name>
    <name type="synonym">Gerbillus unguiculatus</name>
    <dbReference type="NCBI Taxonomy" id="10047"/>
    <lineage>
        <taxon>Eukaryota</taxon>
        <taxon>Metazoa</taxon>
        <taxon>Chordata</taxon>
        <taxon>Craniata</taxon>
        <taxon>Vertebrata</taxon>
        <taxon>Euteleostomi</taxon>
        <taxon>Mammalia</taxon>
        <taxon>Eutheria</taxon>
        <taxon>Euarchontoglires</taxon>
        <taxon>Glires</taxon>
        <taxon>Rodentia</taxon>
        <taxon>Myomorpha</taxon>
        <taxon>Muroidea</taxon>
        <taxon>Muridae</taxon>
        <taxon>Gerbillinae</taxon>
        <taxon>Meriones</taxon>
    </lineage>
</organism>
<dbReference type="EMBL" id="AF011903">
    <property type="protein sequence ID" value="AAB65429.1"/>
    <property type="molecule type" value="mRNA"/>
</dbReference>
<dbReference type="SMR" id="O35210"/>
<dbReference type="GlyCosmos" id="O35210">
    <property type="glycosylation" value="3 sites, No reported glycans"/>
</dbReference>
<dbReference type="Ensembl" id="ENSMUGT00000027020">
    <property type="protein sequence ID" value="ENSMUGP00000023563"/>
    <property type="gene ID" value="ENSMUGG00000019728"/>
</dbReference>
<dbReference type="Ensembl" id="ENSMUGT00000027033">
    <property type="protein sequence ID" value="ENSMUGP00000023574"/>
    <property type="gene ID" value="ENSMUGG00000019735"/>
</dbReference>
<dbReference type="OrthoDB" id="8804420at2759"/>
<dbReference type="GO" id="GO:0009897">
    <property type="term" value="C:external side of plasma membrane"/>
    <property type="evidence" value="ECO:0007669"/>
    <property type="project" value="TreeGrafter"/>
</dbReference>
<dbReference type="GO" id="GO:0001596">
    <property type="term" value="F:angiotensin type I receptor activity"/>
    <property type="evidence" value="ECO:0000314"/>
    <property type="project" value="UniProtKB"/>
</dbReference>
<dbReference type="GO" id="GO:0004945">
    <property type="term" value="F:angiotensin type II receptor activity"/>
    <property type="evidence" value="ECO:0007669"/>
    <property type="project" value="InterPro"/>
</dbReference>
<dbReference type="GO" id="GO:0019957">
    <property type="term" value="F:C-C chemokine binding"/>
    <property type="evidence" value="ECO:0007669"/>
    <property type="project" value="TreeGrafter"/>
</dbReference>
<dbReference type="GO" id="GO:0016493">
    <property type="term" value="F:C-C chemokine receptor activity"/>
    <property type="evidence" value="ECO:0007669"/>
    <property type="project" value="TreeGrafter"/>
</dbReference>
<dbReference type="GO" id="GO:0019722">
    <property type="term" value="P:calcium-mediated signaling"/>
    <property type="evidence" value="ECO:0007669"/>
    <property type="project" value="TreeGrafter"/>
</dbReference>
<dbReference type="GO" id="GO:0006955">
    <property type="term" value="P:immune response"/>
    <property type="evidence" value="ECO:0007669"/>
    <property type="project" value="TreeGrafter"/>
</dbReference>
<dbReference type="GO" id="GO:0002034">
    <property type="term" value="P:maintenance of blood vessel diameter homeostasis by renin-angiotensin"/>
    <property type="evidence" value="ECO:0000250"/>
    <property type="project" value="UniProtKB"/>
</dbReference>
<dbReference type="GO" id="GO:0030593">
    <property type="term" value="P:neutrophil chemotaxis"/>
    <property type="evidence" value="ECO:0007669"/>
    <property type="project" value="TreeGrafter"/>
</dbReference>
<dbReference type="GO" id="GO:0007204">
    <property type="term" value="P:positive regulation of cytosolic calcium ion concentration"/>
    <property type="evidence" value="ECO:0007669"/>
    <property type="project" value="TreeGrafter"/>
</dbReference>
<dbReference type="GO" id="GO:0019229">
    <property type="term" value="P:regulation of vasoconstriction"/>
    <property type="evidence" value="ECO:0007669"/>
    <property type="project" value="InterPro"/>
</dbReference>
<dbReference type="CDD" id="cd15192">
    <property type="entry name" value="7tmA_AT1R"/>
    <property type="match status" value="1"/>
</dbReference>
<dbReference type="FunFam" id="1.20.1070.10:FF:000088">
    <property type="entry name" value="Angiotensin II receptor type 1"/>
    <property type="match status" value="1"/>
</dbReference>
<dbReference type="Gene3D" id="1.20.1070.10">
    <property type="entry name" value="Rhodopsin 7-helix transmembrane proteins"/>
    <property type="match status" value="1"/>
</dbReference>
<dbReference type="InterPro" id="IPR000190">
    <property type="entry name" value="ATII_AT1_rcpt"/>
</dbReference>
<dbReference type="InterPro" id="IPR000248">
    <property type="entry name" value="ATII_rcpt"/>
</dbReference>
<dbReference type="InterPro" id="IPR050119">
    <property type="entry name" value="CCR1-9-like"/>
</dbReference>
<dbReference type="InterPro" id="IPR000276">
    <property type="entry name" value="GPCR_Rhodpsn"/>
</dbReference>
<dbReference type="InterPro" id="IPR017452">
    <property type="entry name" value="GPCR_Rhodpsn_7TM"/>
</dbReference>
<dbReference type="PANTHER" id="PTHR10489">
    <property type="entry name" value="CELL ADHESION MOLECULE"/>
    <property type="match status" value="1"/>
</dbReference>
<dbReference type="PANTHER" id="PTHR10489:SF956">
    <property type="entry name" value="TYPE-1 ANGIOTENSIN II RECEPTOR A"/>
    <property type="match status" value="1"/>
</dbReference>
<dbReference type="Pfam" id="PF00001">
    <property type="entry name" value="7tm_1"/>
    <property type="match status" value="1"/>
</dbReference>
<dbReference type="PRINTS" id="PR00241">
    <property type="entry name" value="ANGIOTENSINR"/>
</dbReference>
<dbReference type="PRINTS" id="PR00635">
    <property type="entry name" value="ANGIOTENSN1R"/>
</dbReference>
<dbReference type="PRINTS" id="PR00237">
    <property type="entry name" value="GPCRRHODOPSN"/>
</dbReference>
<dbReference type="SMART" id="SM01381">
    <property type="entry name" value="7TM_GPCR_Srsx"/>
    <property type="match status" value="1"/>
</dbReference>
<dbReference type="SUPFAM" id="SSF81321">
    <property type="entry name" value="Family A G protein-coupled receptor-like"/>
    <property type="match status" value="1"/>
</dbReference>
<dbReference type="PROSITE" id="PS00237">
    <property type="entry name" value="G_PROTEIN_RECEP_F1_1"/>
    <property type="match status" value="1"/>
</dbReference>
<dbReference type="PROSITE" id="PS50262">
    <property type="entry name" value="G_PROTEIN_RECEP_F1_2"/>
    <property type="match status" value="1"/>
</dbReference>
<protein>
    <recommendedName>
        <fullName>Type-1 angiotensin II receptor</fullName>
    </recommendedName>
    <alternativeName>
        <fullName evidence="6">Angiotensin II type-1 receptor</fullName>
        <shortName>AT1 receptor</shortName>
        <shortName evidence="6">GkAT1</shortName>
    </alternativeName>
</protein>